<dbReference type="EC" id="4.1.2.13" evidence="1"/>
<dbReference type="EMBL" id="CP000703">
    <property type="protein sequence ID" value="ABQ50404.1"/>
    <property type="molecule type" value="Genomic_DNA"/>
</dbReference>
<dbReference type="RefSeq" id="WP_001031409.1">
    <property type="nucleotide sequence ID" value="NC_009487.1"/>
</dbReference>
<dbReference type="SMR" id="A5IW31"/>
<dbReference type="KEGG" id="saj:SaurJH9_2628"/>
<dbReference type="HOGENOM" id="CLU_081560_0_0_9"/>
<dbReference type="UniPathway" id="UPA00109">
    <property type="reaction ID" value="UER00183"/>
</dbReference>
<dbReference type="GO" id="GO:0004332">
    <property type="term" value="F:fructose-bisphosphate aldolase activity"/>
    <property type="evidence" value="ECO:0007669"/>
    <property type="project" value="UniProtKB-UniRule"/>
</dbReference>
<dbReference type="GO" id="GO:0006096">
    <property type="term" value="P:glycolytic process"/>
    <property type="evidence" value="ECO:0007669"/>
    <property type="project" value="UniProtKB-UniRule"/>
</dbReference>
<dbReference type="Gene3D" id="3.20.20.70">
    <property type="entry name" value="Aldolase class I"/>
    <property type="match status" value="1"/>
</dbReference>
<dbReference type="HAMAP" id="MF_00729">
    <property type="entry name" value="FBP_aldolase_1"/>
    <property type="match status" value="1"/>
</dbReference>
<dbReference type="InterPro" id="IPR013785">
    <property type="entry name" value="Aldolase_TIM"/>
</dbReference>
<dbReference type="InterPro" id="IPR000741">
    <property type="entry name" value="FBA_I"/>
</dbReference>
<dbReference type="InterPro" id="IPR023014">
    <property type="entry name" value="FBA_I_Gram+-type"/>
</dbReference>
<dbReference type="NCBIfam" id="NF003784">
    <property type="entry name" value="PRK05377.1"/>
    <property type="match status" value="1"/>
</dbReference>
<dbReference type="PANTHER" id="PTHR11627">
    <property type="entry name" value="FRUCTOSE-BISPHOSPHATE ALDOLASE"/>
    <property type="match status" value="1"/>
</dbReference>
<dbReference type="Pfam" id="PF00274">
    <property type="entry name" value="Glycolytic"/>
    <property type="match status" value="1"/>
</dbReference>
<dbReference type="SUPFAM" id="SSF51569">
    <property type="entry name" value="Aldolase"/>
    <property type="match status" value="1"/>
</dbReference>
<name>ALF1_STAA9</name>
<proteinExistence type="inferred from homology"/>
<comment type="catalytic activity">
    <reaction evidence="1">
        <text>beta-D-fructose 1,6-bisphosphate = D-glyceraldehyde 3-phosphate + dihydroxyacetone phosphate</text>
        <dbReference type="Rhea" id="RHEA:14729"/>
        <dbReference type="ChEBI" id="CHEBI:32966"/>
        <dbReference type="ChEBI" id="CHEBI:57642"/>
        <dbReference type="ChEBI" id="CHEBI:59776"/>
        <dbReference type="EC" id="4.1.2.13"/>
    </reaction>
</comment>
<comment type="pathway">
    <text evidence="1">Carbohydrate degradation; glycolysis; D-glyceraldehyde 3-phosphate and glycerone phosphate from D-glucose: step 4/4.</text>
</comment>
<comment type="similarity">
    <text evidence="1">Belongs to the class I fructose-bisphosphate aldolase family.</text>
</comment>
<evidence type="ECO:0000255" key="1">
    <source>
        <dbReference type="HAMAP-Rule" id="MF_00729"/>
    </source>
</evidence>
<accession>A5IW31</accession>
<gene>
    <name evidence="1" type="primary">fda</name>
    <name type="ordered locus">SaurJH9_2628</name>
</gene>
<sequence length="296" mass="33042">MNKEQLEKMKNGKGFIAALDQSGGSTPKALKEYGVNEDQYSNEDEMFQLVHDMRTRVVTSPSFSPDKILGAILFEQTMDREVEGKYTADYLADKGVVPFLKVDKGLAEEQNGVQLMKPIDNLDSLLDRANERHIFGTKMRSNILELNEQGIKDVVEQQFEVAKQIIAKGLVPIIEPEVNINAKDKAEIEKVLKAELKKGLDSLNADQLVMLKLTIPTEPNLYKELAEHPNVVRVVVLSGGYSREKANELLKDNDELIASFSRALASDLRADQSKEEFDKALGDAVESIYDASVNKN</sequence>
<feature type="chain" id="PRO_1000083325" description="Fructose-bisphosphate aldolase class 1">
    <location>
        <begin position="1"/>
        <end position="296"/>
    </location>
</feature>
<feature type="active site" description="Proton acceptor" evidence="1">
    <location>
        <position position="175"/>
    </location>
</feature>
<feature type="active site" description="Schiff-base intermediate with dihydroxyacetone-P" evidence="1">
    <location>
        <position position="212"/>
    </location>
</feature>
<protein>
    <recommendedName>
        <fullName evidence="1">Fructose-bisphosphate aldolase class 1</fullName>
        <ecNumber evidence="1">4.1.2.13</ecNumber>
    </recommendedName>
    <alternativeName>
        <fullName>Fructose-bisphosphate aldolase class I</fullName>
        <shortName evidence="1">FBP aldolase</shortName>
    </alternativeName>
</protein>
<keyword id="KW-0324">Glycolysis</keyword>
<keyword id="KW-0456">Lyase</keyword>
<keyword id="KW-0704">Schiff base</keyword>
<reference key="1">
    <citation type="submission" date="2007-05" db="EMBL/GenBank/DDBJ databases">
        <title>Complete sequence of chromosome of Staphylococcus aureus subsp. aureus JH9.</title>
        <authorList>
            <consortium name="US DOE Joint Genome Institute"/>
            <person name="Copeland A."/>
            <person name="Lucas S."/>
            <person name="Lapidus A."/>
            <person name="Barry K."/>
            <person name="Detter J.C."/>
            <person name="Glavina del Rio T."/>
            <person name="Hammon N."/>
            <person name="Israni S."/>
            <person name="Pitluck S."/>
            <person name="Chain P."/>
            <person name="Malfatti S."/>
            <person name="Shin M."/>
            <person name="Vergez L."/>
            <person name="Schmutz J."/>
            <person name="Larimer F."/>
            <person name="Land M."/>
            <person name="Hauser L."/>
            <person name="Kyrpides N."/>
            <person name="Kim E."/>
            <person name="Tomasz A."/>
            <person name="Richardson P."/>
        </authorList>
    </citation>
    <scope>NUCLEOTIDE SEQUENCE [LARGE SCALE GENOMIC DNA]</scope>
    <source>
        <strain>JH9</strain>
    </source>
</reference>
<organism>
    <name type="scientific">Staphylococcus aureus (strain JH9)</name>
    <dbReference type="NCBI Taxonomy" id="359786"/>
    <lineage>
        <taxon>Bacteria</taxon>
        <taxon>Bacillati</taxon>
        <taxon>Bacillota</taxon>
        <taxon>Bacilli</taxon>
        <taxon>Bacillales</taxon>
        <taxon>Staphylococcaceae</taxon>
        <taxon>Staphylococcus</taxon>
    </lineage>
</organism>